<proteinExistence type="inferred from homology"/>
<sequence>MKSHIQSLLEQTIESFKQQGILPADFEARIQVDRTKDKSHGDLATNLAMMLTKAAGKNPRELAQLIIDNLPASNYVAKVEIAGPGFINFFIDDSALANQLQAAISDEHLGIKLPTPQTIVVDYSSPNLAKEMHVGHLRSTIIGDSVVRTLEFLGHKVIRQNHVGDWGTQFGMLLAYMEELRAQNGEQAQLELSDLETFYRAAKLRFDESAEFATRARQLVVELQSGDEYCNKLWREFNDISLSHCHEVYERLGVSLTRADVHGESAYNADLEQVVKDLDAQGLLTQSNGAKVVFQEEFRNKEGEALPVIIQKADGGYLYATTDLAAMRYRSSVLKADRVLYFVDLRQALHFQQVFSLAKLAKFVRNDMSLEHLGFGTMNGEDGRPFKTRTGGVVKLVDLLDEANTRALELVRSKNPDMDEATLAEIARVVGISAVKYADLSKNRTSDYIFSFEQMLSFEGNTAPYLLYAYTRVAGIFKRATDIDLSQAKIVLEHEKEKDLGNKLAQFGEILSRVVDKGQPHVLCGYLYELAGAFSSFYEACPVLAADNDEQKHSRLLLSQLTANTLQKGLNLLGIETLERM</sequence>
<accession>A0L1H3</accession>
<gene>
    <name evidence="1" type="primary">argS</name>
    <name type="ordered locus">Shewana3_3673</name>
</gene>
<keyword id="KW-0030">Aminoacyl-tRNA synthetase</keyword>
<keyword id="KW-0067">ATP-binding</keyword>
<keyword id="KW-0963">Cytoplasm</keyword>
<keyword id="KW-0436">Ligase</keyword>
<keyword id="KW-0547">Nucleotide-binding</keyword>
<keyword id="KW-0648">Protein biosynthesis</keyword>
<dbReference type="EC" id="6.1.1.19" evidence="1"/>
<dbReference type="EMBL" id="CP000469">
    <property type="protein sequence ID" value="ABK49892.1"/>
    <property type="molecule type" value="Genomic_DNA"/>
</dbReference>
<dbReference type="RefSeq" id="WP_011718441.1">
    <property type="nucleotide sequence ID" value="NC_008577.1"/>
</dbReference>
<dbReference type="SMR" id="A0L1H3"/>
<dbReference type="STRING" id="94122.Shewana3_3673"/>
<dbReference type="KEGG" id="shn:Shewana3_3673"/>
<dbReference type="eggNOG" id="COG0018">
    <property type="taxonomic scope" value="Bacteria"/>
</dbReference>
<dbReference type="HOGENOM" id="CLU_006406_5_1_6"/>
<dbReference type="OrthoDB" id="9803211at2"/>
<dbReference type="Proteomes" id="UP000002589">
    <property type="component" value="Chromosome"/>
</dbReference>
<dbReference type="GO" id="GO:0005737">
    <property type="term" value="C:cytoplasm"/>
    <property type="evidence" value="ECO:0007669"/>
    <property type="project" value="UniProtKB-SubCell"/>
</dbReference>
<dbReference type="GO" id="GO:0004814">
    <property type="term" value="F:arginine-tRNA ligase activity"/>
    <property type="evidence" value="ECO:0007669"/>
    <property type="project" value="UniProtKB-UniRule"/>
</dbReference>
<dbReference type="GO" id="GO:0005524">
    <property type="term" value="F:ATP binding"/>
    <property type="evidence" value="ECO:0007669"/>
    <property type="project" value="UniProtKB-UniRule"/>
</dbReference>
<dbReference type="GO" id="GO:0006420">
    <property type="term" value="P:arginyl-tRNA aminoacylation"/>
    <property type="evidence" value="ECO:0007669"/>
    <property type="project" value="UniProtKB-UniRule"/>
</dbReference>
<dbReference type="CDD" id="cd07956">
    <property type="entry name" value="Anticodon_Ia_Arg"/>
    <property type="match status" value="1"/>
</dbReference>
<dbReference type="CDD" id="cd00671">
    <property type="entry name" value="ArgRS_core"/>
    <property type="match status" value="1"/>
</dbReference>
<dbReference type="FunFam" id="1.10.730.10:FF:000001">
    <property type="entry name" value="Arginine--tRNA ligase"/>
    <property type="match status" value="1"/>
</dbReference>
<dbReference type="FunFam" id="3.30.1360.70:FF:000003">
    <property type="entry name" value="Arginine--tRNA ligase"/>
    <property type="match status" value="1"/>
</dbReference>
<dbReference type="FunFam" id="3.40.50.620:FF:000030">
    <property type="entry name" value="Arginine--tRNA ligase"/>
    <property type="match status" value="1"/>
</dbReference>
<dbReference type="Gene3D" id="3.30.1360.70">
    <property type="entry name" value="Arginyl tRNA synthetase N-terminal domain"/>
    <property type="match status" value="1"/>
</dbReference>
<dbReference type="Gene3D" id="3.40.50.620">
    <property type="entry name" value="HUPs"/>
    <property type="match status" value="1"/>
</dbReference>
<dbReference type="Gene3D" id="1.10.730.10">
    <property type="entry name" value="Isoleucyl-tRNA Synthetase, Domain 1"/>
    <property type="match status" value="1"/>
</dbReference>
<dbReference type="HAMAP" id="MF_00123">
    <property type="entry name" value="Arg_tRNA_synth"/>
    <property type="match status" value="1"/>
</dbReference>
<dbReference type="InterPro" id="IPR001412">
    <property type="entry name" value="aa-tRNA-synth_I_CS"/>
</dbReference>
<dbReference type="InterPro" id="IPR001278">
    <property type="entry name" value="Arg-tRNA-ligase"/>
</dbReference>
<dbReference type="InterPro" id="IPR005148">
    <property type="entry name" value="Arg-tRNA-synth_N"/>
</dbReference>
<dbReference type="InterPro" id="IPR036695">
    <property type="entry name" value="Arg-tRNA-synth_N_sf"/>
</dbReference>
<dbReference type="InterPro" id="IPR035684">
    <property type="entry name" value="ArgRS_core"/>
</dbReference>
<dbReference type="InterPro" id="IPR008909">
    <property type="entry name" value="DALR_anticod-bd"/>
</dbReference>
<dbReference type="InterPro" id="IPR014729">
    <property type="entry name" value="Rossmann-like_a/b/a_fold"/>
</dbReference>
<dbReference type="InterPro" id="IPR009080">
    <property type="entry name" value="tRNAsynth_Ia_anticodon-bd"/>
</dbReference>
<dbReference type="NCBIfam" id="TIGR00456">
    <property type="entry name" value="argS"/>
    <property type="match status" value="1"/>
</dbReference>
<dbReference type="PANTHER" id="PTHR11956:SF5">
    <property type="entry name" value="ARGININE--TRNA LIGASE, CYTOPLASMIC"/>
    <property type="match status" value="1"/>
</dbReference>
<dbReference type="PANTHER" id="PTHR11956">
    <property type="entry name" value="ARGINYL-TRNA SYNTHETASE"/>
    <property type="match status" value="1"/>
</dbReference>
<dbReference type="Pfam" id="PF03485">
    <property type="entry name" value="Arg_tRNA_synt_N"/>
    <property type="match status" value="1"/>
</dbReference>
<dbReference type="Pfam" id="PF05746">
    <property type="entry name" value="DALR_1"/>
    <property type="match status" value="1"/>
</dbReference>
<dbReference type="Pfam" id="PF00750">
    <property type="entry name" value="tRNA-synt_1d"/>
    <property type="match status" value="1"/>
</dbReference>
<dbReference type="PRINTS" id="PR01038">
    <property type="entry name" value="TRNASYNTHARG"/>
</dbReference>
<dbReference type="SMART" id="SM01016">
    <property type="entry name" value="Arg_tRNA_synt_N"/>
    <property type="match status" value="1"/>
</dbReference>
<dbReference type="SMART" id="SM00836">
    <property type="entry name" value="DALR_1"/>
    <property type="match status" value="1"/>
</dbReference>
<dbReference type="SUPFAM" id="SSF47323">
    <property type="entry name" value="Anticodon-binding domain of a subclass of class I aminoacyl-tRNA synthetases"/>
    <property type="match status" value="1"/>
</dbReference>
<dbReference type="SUPFAM" id="SSF55190">
    <property type="entry name" value="Arginyl-tRNA synthetase (ArgRS), N-terminal 'additional' domain"/>
    <property type="match status" value="1"/>
</dbReference>
<dbReference type="SUPFAM" id="SSF52374">
    <property type="entry name" value="Nucleotidylyl transferase"/>
    <property type="match status" value="1"/>
</dbReference>
<dbReference type="PROSITE" id="PS00178">
    <property type="entry name" value="AA_TRNA_LIGASE_I"/>
    <property type="match status" value="1"/>
</dbReference>
<name>SYR_SHESA</name>
<organism>
    <name type="scientific">Shewanella sp. (strain ANA-3)</name>
    <dbReference type="NCBI Taxonomy" id="94122"/>
    <lineage>
        <taxon>Bacteria</taxon>
        <taxon>Pseudomonadati</taxon>
        <taxon>Pseudomonadota</taxon>
        <taxon>Gammaproteobacteria</taxon>
        <taxon>Alteromonadales</taxon>
        <taxon>Shewanellaceae</taxon>
        <taxon>Shewanella</taxon>
    </lineage>
</organism>
<feature type="chain" id="PRO_1000018118" description="Arginine--tRNA ligase">
    <location>
        <begin position="1"/>
        <end position="581"/>
    </location>
</feature>
<feature type="short sequence motif" description="'HIGH' region">
    <location>
        <begin position="126"/>
        <end position="136"/>
    </location>
</feature>
<comment type="catalytic activity">
    <reaction evidence="1">
        <text>tRNA(Arg) + L-arginine + ATP = L-arginyl-tRNA(Arg) + AMP + diphosphate</text>
        <dbReference type="Rhea" id="RHEA:20301"/>
        <dbReference type="Rhea" id="RHEA-COMP:9658"/>
        <dbReference type="Rhea" id="RHEA-COMP:9673"/>
        <dbReference type="ChEBI" id="CHEBI:30616"/>
        <dbReference type="ChEBI" id="CHEBI:32682"/>
        <dbReference type="ChEBI" id="CHEBI:33019"/>
        <dbReference type="ChEBI" id="CHEBI:78442"/>
        <dbReference type="ChEBI" id="CHEBI:78513"/>
        <dbReference type="ChEBI" id="CHEBI:456215"/>
        <dbReference type="EC" id="6.1.1.19"/>
    </reaction>
</comment>
<comment type="subunit">
    <text evidence="1">Monomer.</text>
</comment>
<comment type="subcellular location">
    <subcellularLocation>
        <location evidence="1">Cytoplasm</location>
    </subcellularLocation>
</comment>
<comment type="similarity">
    <text evidence="1">Belongs to the class-I aminoacyl-tRNA synthetase family.</text>
</comment>
<reference key="1">
    <citation type="submission" date="2006-09" db="EMBL/GenBank/DDBJ databases">
        <title>Complete sequence of chromosome 1 of Shewanella sp. ANA-3.</title>
        <authorList>
            <person name="Copeland A."/>
            <person name="Lucas S."/>
            <person name="Lapidus A."/>
            <person name="Barry K."/>
            <person name="Detter J.C."/>
            <person name="Glavina del Rio T."/>
            <person name="Hammon N."/>
            <person name="Israni S."/>
            <person name="Dalin E."/>
            <person name="Tice H."/>
            <person name="Pitluck S."/>
            <person name="Chertkov O."/>
            <person name="Brettin T."/>
            <person name="Bruce D."/>
            <person name="Han C."/>
            <person name="Tapia R."/>
            <person name="Gilna P."/>
            <person name="Schmutz J."/>
            <person name="Larimer F."/>
            <person name="Land M."/>
            <person name="Hauser L."/>
            <person name="Kyrpides N."/>
            <person name="Kim E."/>
            <person name="Newman D."/>
            <person name="Salticov C."/>
            <person name="Konstantinidis K."/>
            <person name="Klappenback J."/>
            <person name="Tiedje J."/>
            <person name="Richardson P."/>
        </authorList>
    </citation>
    <scope>NUCLEOTIDE SEQUENCE [LARGE SCALE GENOMIC DNA]</scope>
    <source>
        <strain>ANA-3</strain>
    </source>
</reference>
<evidence type="ECO:0000255" key="1">
    <source>
        <dbReference type="HAMAP-Rule" id="MF_00123"/>
    </source>
</evidence>
<protein>
    <recommendedName>
        <fullName evidence="1">Arginine--tRNA ligase</fullName>
        <ecNumber evidence="1">6.1.1.19</ecNumber>
    </recommendedName>
    <alternativeName>
        <fullName evidence="1">Arginyl-tRNA synthetase</fullName>
        <shortName evidence="1">ArgRS</shortName>
    </alternativeName>
</protein>